<evidence type="ECO:0000255" key="1">
    <source>
        <dbReference type="HAMAP-Rule" id="MF_01039"/>
    </source>
</evidence>
<evidence type="ECO:0000305" key="2"/>
<gene>
    <name evidence="1" type="primary">gpmA</name>
    <name type="synonym">gpm</name>
    <name type="ordered locus">BL1656</name>
</gene>
<dbReference type="EC" id="5.4.2.11" evidence="1"/>
<dbReference type="EMBL" id="AE014295">
    <property type="protein sequence ID" value="AAN25442.1"/>
    <property type="status" value="ALT_INIT"/>
    <property type="molecule type" value="Genomic_DNA"/>
</dbReference>
<dbReference type="RefSeq" id="NP_696806.1">
    <property type="nucleotide sequence ID" value="NC_004307.2"/>
</dbReference>
<dbReference type="RefSeq" id="WP_007052347.1">
    <property type="nucleotide sequence ID" value="NC_004307.2"/>
</dbReference>
<dbReference type="SMR" id="P59159"/>
<dbReference type="STRING" id="206672.BL1656"/>
<dbReference type="MoonProt" id="P59159"/>
<dbReference type="EnsemblBacteria" id="AAN25442">
    <property type="protein sequence ID" value="AAN25442"/>
    <property type="gene ID" value="BL1656"/>
</dbReference>
<dbReference type="KEGG" id="blo:BL1656"/>
<dbReference type="PATRIC" id="fig|206672.9.peg.1710"/>
<dbReference type="HOGENOM" id="CLU_033323_1_1_11"/>
<dbReference type="OrthoDB" id="9781415at2"/>
<dbReference type="UniPathway" id="UPA00109">
    <property type="reaction ID" value="UER00186"/>
</dbReference>
<dbReference type="Proteomes" id="UP000000439">
    <property type="component" value="Chromosome"/>
</dbReference>
<dbReference type="GO" id="GO:0004619">
    <property type="term" value="F:phosphoglycerate mutase activity"/>
    <property type="evidence" value="ECO:0007669"/>
    <property type="project" value="UniProtKB-EC"/>
</dbReference>
<dbReference type="GO" id="GO:0006094">
    <property type="term" value="P:gluconeogenesis"/>
    <property type="evidence" value="ECO:0007669"/>
    <property type="project" value="UniProtKB-UniRule"/>
</dbReference>
<dbReference type="GO" id="GO:0006096">
    <property type="term" value="P:glycolytic process"/>
    <property type="evidence" value="ECO:0007669"/>
    <property type="project" value="UniProtKB-UniRule"/>
</dbReference>
<dbReference type="CDD" id="cd07067">
    <property type="entry name" value="HP_PGM_like"/>
    <property type="match status" value="1"/>
</dbReference>
<dbReference type="FunFam" id="3.40.50.1240:FF:000003">
    <property type="entry name" value="2,3-bisphosphoglycerate-dependent phosphoglycerate mutase"/>
    <property type="match status" value="1"/>
</dbReference>
<dbReference type="Gene3D" id="3.40.50.1240">
    <property type="entry name" value="Phosphoglycerate mutase-like"/>
    <property type="match status" value="1"/>
</dbReference>
<dbReference type="HAMAP" id="MF_01039">
    <property type="entry name" value="PGAM_GpmA"/>
    <property type="match status" value="1"/>
</dbReference>
<dbReference type="InterPro" id="IPR013078">
    <property type="entry name" value="His_Pase_superF_clade-1"/>
</dbReference>
<dbReference type="InterPro" id="IPR029033">
    <property type="entry name" value="His_PPase_superfam"/>
</dbReference>
<dbReference type="InterPro" id="IPR001345">
    <property type="entry name" value="PG/BPGM_mutase_AS"/>
</dbReference>
<dbReference type="InterPro" id="IPR005952">
    <property type="entry name" value="Phosphogly_mut1"/>
</dbReference>
<dbReference type="NCBIfam" id="TIGR01258">
    <property type="entry name" value="pgm_1"/>
    <property type="match status" value="1"/>
</dbReference>
<dbReference type="NCBIfam" id="NF010713">
    <property type="entry name" value="PRK14115.1"/>
    <property type="match status" value="1"/>
</dbReference>
<dbReference type="NCBIfam" id="NF010718">
    <property type="entry name" value="PRK14120.1"/>
    <property type="match status" value="1"/>
</dbReference>
<dbReference type="PANTHER" id="PTHR11931">
    <property type="entry name" value="PHOSPHOGLYCERATE MUTASE"/>
    <property type="match status" value="1"/>
</dbReference>
<dbReference type="Pfam" id="PF00300">
    <property type="entry name" value="His_Phos_1"/>
    <property type="match status" value="2"/>
</dbReference>
<dbReference type="PIRSF" id="PIRSF000709">
    <property type="entry name" value="6PFK_2-Ptase"/>
    <property type="match status" value="1"/>
</dbReference>
<dbReference type="SMART" id="SM00855">
    <property type="entry name" value="PGAM"/>
    <property type="match status" value="1"/>
</dbReference>
<dbReference type="SUPFAM" id="SSF53254">
    <property type="entry name" value="Phosphoglycerate mutase-like"/>
    <property type="match status" value="1"/>
</dbReference>
<dbReference type="PROSITE" id="PS00175">
    <property type="entry name" value="PG_MUTASE"/>
    <property type="match status" value="1"/>
</dbReference>
<keyword id="KW-0312">Gluconeogenesis</keyword>
<keyword id="KW-0324">Glycolysis</keyword>
<keyword id="KW-0413">Isomerase</keyword>
<keyword id="KW-1185">Reference proteome</keyword>
<organism>
    <name type="scientific">Bifidobacterium longum (strain NCC 2705)</name>
    <dbReference type="NCBI Taxonomy" id="206672"/>
    <lineage>
        <taxon>Bacteria</taxon>
        <taxon>Bacillati</taxon>
        <taxon>Actinomycetota</taxon>
        <taxon>Actinomycetes</taxon>
        <taxon>Bifidobacteriales</taxon>
        <taxon>Bifidobacteriaceae</taxon>
        <taxon>Bifidobacterium</taxon>
    </lineage>
</organism>
<accession>P59159</accession>
<reference key="1">
    <citation type="journal article" date="2002" name="Proc. Natl. Acad. Sci. U.S.A.">
        <title>The genome sequence of Bifidobacterium longum reflects its adaptation to the human gastrointestinal tract.</title>
        <authorList>
            <person name="Schell M.A."/>
            <person name="Karmirantzou M."/>
            <person name="Snel B."/>
            <person name="Vilanova D."/>
            <person name="Berger B."/>
            <person name="Pessi G."/>
            <person name="Zwahlen M.-C."/>
            <person name="Desiere F."/>
            <person name="Bork P."/>
            <person name="Delley M."/>
            <person name="Pridmore R.D."/>
            <person name="Arigoni F."/>
        </authorList>
    </citation>
    <scope>NUCLEOTIDE SEQUENCE [LARGE SCALE GENOMIC DNA]</scope>
    <source>
        <strain>NCC 2705</strain>
    </source>
</reference>
<sequence>MTYKLVLLRHGQSAWNKTNQFTGWVDVPLTEQGEAEAKRGGELLKEKNVLPDIVFTSLLRRAINTANIALDAADRLWIPVQRDWRLNERHYGALQGKNKTEIREEYGDEKFMLWRRSYATPPPEIDPNDQYAQNNDPRYAGDPVPEAECLANVVERVKPYFESAIEPELKAGKTVLIAAHGNSLRAIVKMLDNLSEEEIAKVNIPTAIPLLYELDENFKPIKPRGEYLDPEAAAAGAAAVAAQGQK</sequence>
<name>GPMA_BIFLO</name>
<comment type="function">
    <text evidence="1">Catalyzes the interconversion of 2-phosphoglycerate and 3-phosphoglycerate.</text>
</comment>
<comment type="catalytic activity">
    <reaction evidence="1">
        <text>(2R)-2-phosphoglycerate = (2R)-3-phosphoglycerate</text>
        <dbReference type="Rhea" id="RHEA:15901"/>
        <dbReference type="ChEBI" id="CHEBI:58272"/>
        <dbReference type="ChEBI" id="CHEBI:58289"/>
        <dbReference type="EC" id="5.4.2.11"/>
    </reaction>
</comment>
<comment type="pathway">
    <text evidence="1">Carbohydrate degradation; glycolysis; pyruvate from D-glyceraldehyde 3-phosphate: step 3/5.</text>
</comment>
<comment type="similarity">
    <text evidence="1">Belongs to the phosphoglycerate mutase family. BPG-dependent PGAM subfamily.</text>
</comment>
<comment type="sequence caution" evidence="2">
    <conflict type="erroneous initiation">
        <sequence resource="EMBL-CDS" id="AAN25442"/>
    </conflict>
    <text>Extended N-terminus.</text>
</comment>
<proteinExistence type="inferred from homology"/>
<protein>
    <recommendedName>
        <fullName evidence="1">2,3-bisphosphoglycerate-dependent phosphoglycerate mutase</fullName>
        <shortName evidence="1">BPG-dependent PGAM</shortName>
        <shortName evidence="1">PGAM</shortName>
        <shortName evidence="1">Phosphoglyceromutase</shortName>
        <shortName evidence="1">dPGM</shortName>
        <ecNumber evidence="1">5.4.2.11</ecNumber>
    </recommendedName>
</protein>
<feature type="chain" id="PRO_0000179850" description="2,3-bisphosphoglycerate-dependent phosphoglycerate mutase">
    <location>
        <begin position="1"/>
        <end position="246"/>
    </location>
</feature>
<feature type="active site" description="Tele-phosphohistidine intermediate" evidence="1">
    <location>
        <position position="10"/>
    </location>
</feature>
<feature type="active site" description="Proton donor/acceptor" evidence="1">
    <location>
        <position position="88"/>
    </location>
</feature>
<feature type="binding site" evidence="1">
    <location>
        <begin position="9"/>
        <end position="16"/>
    </location>
    <ligand>
        <name>substrate</name>
    </ligand>
</feature>
<feature type="binding site" evidence="1">
    <location>
        <begin position="22"/>
        <end position="23"/>
    </location>
    <ligand>
        <name>substrate</name>
    </ligand>
</feature>
<feature type="binding site" evidence="1">
    <location>
        <position position="61"/>
    </location>
    <ligand>
        <name>substrate</name>
    </ligand>
</feature>
<feature type="binding site" evidence="1">
    <location>
        <begin position="88"/>
        <end position="91"/>
    </location>
    <ligand>
        <name>substrate</name>
    </ligand>
</feature>
<feature type="binding site" evidence="1">
    <location>
        <position position="99"/>
    </location>
    <ligand>
        <name>substrate</name>
    </ligand>
</feature>
<feature type="binding site" evidence="1">
    <location>
        <begin position="115"/>
        <end position="116"/>
    </location>
    <ligand>
        <name>substrate</name>
    </ligand>
</feature>
<feature type="binding site" evidence="1">
    <location>
        <begin position="181"/>
        <end position="182"/>
    </location>
    <ligand>
        <name>substrate</name>
    </ligand>
</feature>
<feature type="site" description="Transition state stabilizer" evidence="1">
    <location>
        <position position="180"/>
    </location>
</feature>